<feature type="chain" id="PRO_1000097095" description="Pantothenate synthetase">
    <location>
        <begin position="1"/>
        <end position="287"/>
    </location>
</feature>
<feature type="active site" description="Proton donor" evidence="1">
    <location>
        <position position="37"/>
    </location>
</feature>
<feature type="binding site" evidence="1">
    <location>
        <begin position="30"/>
        <end position="37"/>
    </location>
    <ligand>
        <name>ATP</name>
        <dbReference type="ChEBI" id="CHEBI:30616"/>
    </ligand>
</feature>
<feature type="binding site" evidence="1">
    <location>
        <position position="61"/>
    </location>
    <ligand>
        <name>(R)-pantoate</name>
        <dbReference type="ChEBI" id="CHEBI:15980"/>
    </ligand>
</feature>
<feature type="binding site" evidence="1">
    <location>
        <position position="61"/>
    </location>
    <ligand>
        <name>beta-alanine</name>
        <dbReference type="ChEBI" id="CHEBI:57966"/>
    </ligand>
</feature>
<feature type="binding site" evidence="1">
    <location>
        <begin position="149"/>
        <end position="152"/>
    </location>
    <ligand>
        <name>ATP</name>
        <dbReference type="ChEBI" id="CHEBI:30616"/>
    </ligand>
</feature>
<feature type="binding site" evidence="1">
    <location>
        <position position="155"/>
    </location>
    <ligand>
        <name>(R)-pantoate</name>
        <dbReference type="ChEBI" id="CHEBI:15980"/>
    </ligand>
</feature>
<feature type="binding site" evidence="1">
    <location>
        <position position="178"/>
    </location>
    <ligand>
        <name>ATP</name>
        <dbReference type="ChEBI" id="CHEBI:30616"/>
    </ligand>
</feature>
<feature type="binding site" evidence="1">
    <location>
        <begin position="186"/>
        <end position="189"/>
    </location>
    <ligand>
        <name>ATP</name>
        <dbReference type="ChEBI" id="CHEBI:30616"/>
    </ligand>
</feature>
<keyword id="KW-0067">ATP-binding</keyword>
<keyword id="KW-0963">Cytoplasm</keyword>
<keyword id="KW-0436">Ligase</keyword>
<keyword id="KW-0547">Nucleotide-binding</keyword>
<keyword id="KW-0566">Pantothenate biosynthesis</keyword>
<protein>
    <recommendedName>
        <fullName evidence="1">Pantothenate synthetase</fullName>
        <shortName evidence="1">PS</shortName>
        <ecNumber evidence="1">6.3.2.1</ecNumber>
    </recommendedName>
    <alternativeName>
        <fullName evidence="1">Pantoate--beta-alanine ligase</fullName>
    </alternativeName>
    <alternativeName>
        <fullName evidence="1">Pantoate-activating enzyme</fullName>
    </alternativeName>
</protein>
<gene>
    <name evidence="1" type="primary">panC</name>
    <name type="ordered locus">PputW619_0733</name>
</gene>
<accession>B1J2C1</accession>
<reference key="1">
    <citation type="submission" date="2008-02" db="EMBL/GenBank/DDBJ databases">
        <title>Complete sequence of Pseudomonas putida W619.</title>
        <authorList>
            <person name="Copeland A."/>
            <person name="Lucas S."/>
            <person name="Lapidus A."/>
            <person name="Barry K."/>
            <person name="Detter J.C."/>
            <person name="Glavina del Rio T."/>
            <person name="Dalin E."/>
            <person name="Tice H."/>
            <person name="Pitluck S."/>
            <person name="Chain P."/>
            <person name="Malfatti S."/>
            <person name="Shin M."/>
            <person name="Vergez L."/>
            <person name="Schmutz J."/>
            <person name="Larimer F."/>
            <person name="Land M."/>
            <person name="Hauser L."/>
            <person name="Kyrpides N."/>
            <person name="Kim E."/>
            <person name="Taghavi S."/>
            <person name="Vangronsveld D."/>
            <person name="van der Lelie D."/>
            <person name="Richardson P."/>
        </authorList>
    </citation>
    <scope>NUCLEOTIDE SEQUENCE [LARGE SCALE GENOMIC DNA]</scope>
    <source>
        <strain>W619</strain>
    </source>
</reference>
<sequence length="287" mass="31210">MNTVKTVRELRAAIARARGEGKRIGFVPTMGNLHSGHAALVTKAAQRADFVVASIFVNPLQFGANEDLDKYPRTLAADQERLLQAGCNLLFAPTVEEMYPDGMAVQTRVSVPNLSEGLCGASRPGHFEGVATVVSKLFNMVQPDLAVFGEKDYQQLAVIRAMVRDLNMPIQIIGEPTVRAEDGLALSSRNGYLTAEQRATAPVVYRTLQQIGDAISRGQRDFAALVADGQAQLAAAGLRPDYLQVRHALTLRPAMVDDRDLVILVAAYLGNTRLIDNLYVHLDEKTA</sequence>
<name>PANC_PSEPW</name>
<comment type="function">
    <text evidence="1">Catalyzes the condensation of pantoate with beta-alanine in an ATP-dependent reaction via a pantoyl-adenylate intermediate.</text>
</comment>
<comment type="catalytic activity">
    <reaction evidence="1">
        <text>(R)-pantoate + beta-alanine + ATP = (R)-pantothenate + AMP + diphosphate + H(+)</text>
        <dbReference type="Rhea" id="RHEA:10912"/>
        <dbReference type="ChEBI" id="CHEBI:15378"/>
        <dbReference type="ChEBI" id="CHEBI:15980"/>
        <dbReference type="ChEBI" id="CHEBI:29032"/>
        <dbReference type="ChEBI" id="CHEBI:30616"/>
        <dbReference type="ChEBI" id="CHEBI:33019"/>
        <dbReference type="ChEBI" id="CHEBI:57966"/>
        <dbReference type="ChEBI" id="CHEBI:456215"/>
        <dbReference type="EC" id="6.3.2.1"/>
    </reaction>
</comment>
<comment type="pathway">
    <text evidence="1">Cofactor biosynthesis; (R)-pantothenate biosynthesis; (R)-pantothenate from (R)-pantoate and beta-alanine: step 1/1.</text>
</comment>
<comment type="subunit">
    <text evidence="1">Homodimer.</text>
</comment>
<comment type="subcellular location">
    <subcellularLocation>
        <location evidence="1">Cytoplasm</location>
    </subcellularLocation>
</comment>
<comment type="miscellaneous">
    <text evidence="1">The reaction proceeds by a bi uni uni bi ping pong mechanism.</text>
</comment>
<comment type="similarity">
    <text evidence="1">Belongs to the pantothenate synthetase family.</text>
</comment>
<proteinExistence type="inferred from homology"/>
<organism>
    <name type="scientific">Pseudomonas putida (strain W619)</name>
    <dbReference type="NCBI Taxonomy" id="390235"/>
    <lineage>
        <taxon>Bacteria</taxon>
        <taxon>Pseudomonadati</taxon>
        <taxon>Pseudomonadota</taxon>
        <taxon>Gammaproteobacteria</taxon>
        <taxon>Pseudomonadales</taxon>
        <taxon>Pseudomonadaceae</taxon>
        <taxon>Pseudomonas</taxon>
    </lineage>
</organism>
<evidence type="ECO:0000255" key="1">
    <source>
        <dbReference type="HAMAP-Rule" id="MF_00158"/>
    </source>
</evidence>
<dbReference type="EC" id="6.3.2.1" evidence="1"/>
<dbReference type="EMBL" id="CP000949">
    <property type="protein sequence ID" value="ACA71238.1"/>
    <property type="molecule type" value="Genomic_DNA"/>
</dbReference>
<dbReference type="SMR" id="B1J2C1"/>
<dbReference type="STRING" id="390235.PputW619_0733"/>
<dbReference type="KEGG" id="ppw:PputW619_0733"/>
<dbReference type="eggNOG" id="COG0414">
    <property type="taxonomic scope" value="Bacteria"/>
</dbReference>
<dbReference type="HOGENOM" id="CLU_047148_0_0_6"/>
<dbReference type="OrthoDB" id="9773087at2"/>
<dbReference type="UniPathway" id="UPA00028">
    <property type="reaction ID" value="UER00005"/>
</dbReference>
<dbReference type="GO" id="GO:0005829">
    <property type="term" value="C:cytosol"/>
    <property type="evidence" value="ECO:0007669"/>
    <property type="project" value="TreeGrafter"/>
</dbReference>
<dbReference type="GO" id="GO:0005524">
    <property type="term" value="F:ATP binding"/>
    <property type="evidence" value="ECO:0007669"/>
    <property type="project" value="UniProtKB-KW"/>
</dbReference>
<dbReference type="GO" id="GO:0004592">
    <property type="term" value="F:pantoate-beta-alanine ligase activity"/>
    <property type="evidence" value="ECO:0007669"/>
    <property type="project" value="UniProtKB-UniRule"/>
</dbReference>
<dbReference type="GO" id="GO:0015940">
    <property type="term" value="P:pantothenate biosynthetic process"/>
    <property type="evidence" value="ECO:0007669"/>
    <property type="project" value="UniProtKB-UniRule"/>
</dbReference>
<dbReference type="CDD" id="cd00560">
    <property type="entry name" value="PanC"/>
    <property type="match status" value="1"/>
</dbReference>
<dbReference type="FunFam" id="3.30.1300.10:FF:000001">
    <property type="entry name" value="Pantothenate synthetase"/>
    <property type="match status" value="1"/>
</dbReference>
<dbReference type="FunFam" id="3.40.50.620:FF:000013">
    <property type="entry name" value="Pantothenate synthetase"/>
    <property type="match status" value="1"/>
</dbReference>
<dbReference type="Gene3D" id="3.40.50.620">
    <property type="entry name" value="HUPs"/>
    <property type="match status" value="1"/>
</dbReference>
<dbReference type="Gene3D" id="3.30.1300.10">
    <property type="entry name" value="Pantoate-beta-alanine ligase, C-terminal domain"/>
    <property type="match status" value="1"/>
</dbReference>
<dbReference type="HAMAP" id="MF_00158">
    <property type="entry name" value="PanC"/>
    <property type="match status" value="1"/>
</dbReference>
<dbReference type="InterPro" id="IPR003721">
    <property type="entry name" value="Pantoate_ligase"/>
</dbReference>
<dbReference type="InterPro" id="IPR042176">
    <property type="entry name" value="Pantoate_ligase_C"/>
</dbReference>
<dbReference type="InterPro" id="IPR014729">
    <property type="entry name" value="Rossmann-like_a/b/a_fold"/>
</dbReference>
<dbReference type="NCBIfam" id="TIGR00018">
    <property type="entry name" value="panC"/>
    <property type="match status" value="1"/>
</dbReference>
<dbReference type="PANTHER" id="PTHR21299">
    <property type="entry name" value="CYTIDYLATE KINASE/PANTOATE-BETA-ALANINE LIGASE"/>
    <property type="match status" value="1"/>
</dbReference>
<dbReference type="PANTHER" id="PTHR21299:SF1">
    <property type="entry name" value="PANTOATE--BETA-ALANINE LIGASE"/>
    <property type="match status" value="1"/>
</dbReference>
<dbReference type="Pfam" id="PF02569">
    <property type="entry name" value="Pantoate_ligase"/>
    <property type="match status" value="1"/>
</dbReference>
<dbReference type="SUPFAM" id="SSF52374">
    <property type="entry name" value="Nucleotidylyl transferase"/>
    <property type="match status" value="1"/>
</dbReference>